<feature type="chain" id="PRO_0000179111" description="Uncharacterized protein PA2604">
    <location>
        <begin position="1"/>
        <end position="222"/>
    </location>
</feature>
<feature type="transmembrane region" description="Helical" evidence="1">
    <location>
        <begin position="26"/>
        <end position="46"/>
    </location>
</feature>
<feature type="transmembrane region" description="Helical" evidence="1">
    <location>
        <begin position="48"/>
        <end position="68"/>
    </location>
</feature>
<feature type="transmembrane region" description="Helical" evidence="1">
    <location>
        <begin position="75"/>
        <end position="95"/>
    </location>
</feature>
<feature type="transmembrane region" description="Helical" evidence="1">
    <location>
        <begin position="107"/>
        <end position="127"/>
    </location>
</feature>
<feature type="transmembrane region" description="Helical" evidence="1">
    <location>
        <begin position="139"/>
        <end position="159"/>
    </location>
</feature>
<feature type="transmembrane region" description="Helical" evidence="1">
    <location>
        <begin position="166"/>
        <end position="186"/>
    </location>
</feature>
<feature type="transmembrane region" description="Helical" evidence="1">
    <location>
        <begin position="198"/>
        <end position="218"/>
    </location>
</feature>
<name>Y2604_PSEAE</name>
<reference key="1">
    <citation type="journal article" date="1993" name="Mol. Microbiol.">
        <title>Molecular analysis of a cytotoxin-converting phage, phi CTX, of Pseudomonas aeruginosa: structure of the attP-cos-ctx region and integration into the serine tRNA gene.</title>
        <authorList>
            <person name="Hayashi T."/>
            <person name="Matsumoto H."/>
            <person name="Ohnishi M."/>
            <person name="Terawaki Y."/>
        </authorList>
    </citation>
    <scope>NUCLEOTIDE SEQUENCE [GENOMIC DNA]</scope>
</reference>
<reference key="2">
    <citation type="journal article" date="2000" name="Nature">
        <title>Complete genome sequence of Pseudomonas aeruginosa PAO1, an opportunistic pathogen.</title>
        <authorList>
            <person name="Stover C.K."/>
            <person name="Pham X.-Q.T."/>
            <person name="Erwin A.L."/>
            <person name="Mizoguchi S.D."/>
            <person name="Warrener P."/>
            <person name="Hickey M.J."/>
            <person name="Brinkman F.S.L."/>
            <person name="Hufnagle W.O."/>
            <person name="Kowalik D.J."/>
            <person name="Lagrou M."/>
            <person name="Garber R.L."/>
            <person name="Goltry L."/>
            <person name="Tolentino E."/>
            <person name="Westbrock-Wadman S."/>
            <person name="Yuan Y."/>
            <person name="Brody L.L."/>
            <person name="Coulter S.N."/>
            <person name="Folger K.R."/>
            <person name="Kas A."/>
            <person name="Larbig K."/>
            <person name="Lim R.M."/>
            <person name="Smith K.A."/>
            <person name="Spencer D.H."/>
            <person name="Wong G.K.-S."/>
            <person name="Wu Z."/>
            <person name="Paulsen I.T."/>
            <person name="Reizer J."/>
            <person name="Saier M.H. Jr."/>
            <person name="Hancock R.E.W."/>
            <person name="Lory S."/>
            <person name="Olson M.V."/>
        </authorList>
    </citation>
    <scope>NUCLEOTIDE SEQUENCE [LARGE SCALE GENOMIC DNA]</scope>
    <source>
        <strain>ATCC 15692 / DSM 22644 / CIP 104116 / JCM 14847 / LMG 12228 / 1C / PRS 101 / PAO1</strain>
    </source>
</reference>
<protein>
    <recommendedName>
        <fullName>Uncharacterized protein PA2604</fullName>
    </recommendedName>
</protein>
<dbReference type="EMBL" id="D13407">
    <property type="protein sequence ID" value="BAA02671.1"/>
    <property type="molecule type" value="Genomic_DNA"/>
</dbReference>
<dbReference type="EMBL" id="AE004091">
    <property type="protein sequence ID" value="AAG05992.1"/>
    <property type="molecule type" value="Genomic_DNA"/>
</dbReference>
<dbReference type="PIR" id="S38835">
    <property type="entry name" value="S38835"/>
</dbReference>
<dbReference type="RefSeq" id="NP_251294.1">
    <property type="nucleotide sequence ID" value="NC_002516.2"/>
</dbReference>
<dbReference type="RefSeq" id="WP_003090386.1">
    <property type="nucleotide sequence ID" value="NZ_QZGE01000008.1"/>
</dbReference>
<dbReference type="SMR" id="Q03268"/>
<dbReference type="FunCoup" id="Q03268">
    <property type="interactions" value="270"/>
</dbReference>
<dbReference type="STRING" id="208964.PA2604"/>
<dbReference type="PaxDb" id="208964-PA2604"/>
<dbReference type="DNASU" id="882310"/>
<dbReference type="GeneID" id="882310"/>
<dbReference type="KEGG" id="pae:PA2604"/>
<dbReference type="PATRIC" id="fig|208964.12.peg.2725"/>
<dbReference type="PseudoCAP" id="PA2604"/>
<dbReference type="HOGENOM" id="CLU_058671_2_1_6"/>
<dbReference type="InParanoid" id="Q03268"/>
<dbReference type="OrthoDB" id="9813298at2"/>
<dbReference type="PhylomeDB" id="Q03268"/>
<dbReference type="BioCyc" id="PAER208964:G1FZ6-2644-MONOMER"/>
<dbReference type="Proteomes" id="UP000002438">
    <property type="component" value="Chromosome"/>
</dbReference>
<dbReference type="GO" id="GO:0005886">
    <property type="term" value="C:plasma membrane"/>
    <property type="evidence" value="ECO:0000318"/>
    <property type="project" value="GO_Central"/>
</dbReference>
<dbReference type="GO" id="GO:0005262">
    <property type="term" value="F:calcium channel activity"/>
    <property type="evidence" value="ECO:0000318"/>
    <property type="project" value="GO_Central"/>
</dbReference>
<dbReference type="GO" id="GO:0043066">
    <property type="term" value="P:negative regulation of apoptotic process"/>
    <property type="evidence" value="ECO:0007669"/>
    <property type="project" value="InterPro"/>
</dbReference>
<dbReference type="GO" id="GO:0030162">
    <property type="term" value="P:regulation of proteolysis"/>
    <property type="evidence" value="ECO:0000318"/>
    <property type="project" value="GO_Central"/>
</dbReference>
<dbReference type="CDD" id="cd10433">
    <property type="entry name" value="YccA_like"/>
    <property type="match status" value="1"/>
</dbReference>
<dbReference type="InterPro" id="IPR006213">
    <property type="entry name" value="Bax_inhbtr1_CS"/>
</dbReference>
<dbReference type="InterPro" id="IPR006214">
    <property type="entry name" value="Bax_inhibitor_1-related"/>
</dbReference>
<dbReference type="PANTHER" id="PTHR23291">
    <property type="entry name" value="BAX INHIBITOR-RELATED"/>
    <property type="match status" value="1"/>
</dbReference>
<dbReference type="PANTHER" id="PTHR23291:SF115">
    <property type="entry name" value="MODULATOR OF FTSH PROTEASE YCCA"/>
    <property type="match status" value="1"/>
</dbReference>
<dbReference type="Pfam" id="PF01027">
    <property type="entry name" value="Bax1-I"/>
    <property type="match status" value="1"/>
</dbReference>
<dbReference type="PROSITE" id="PS01243">
    <property type="entry name" value="BI1"/>
    <property type="match status" value="1"/>
</dbReference>
<keyword id="KW-1003">Cell membrane</keyword>
<keyword id="KW-0472">Membrane</keyword>
<keyword id="KW-1185">Reference proteome</keyword>
<keyword id="KW-0812">Transmembrane</keyword>
<keyword id="KW-1133">Transmembrane helix</keyword>
<evidence type="ECO:0000255" key="1"/>
<evidence type="ECO:0000305" key="2"/>
<comment type="subcellular location">
    <subcellularLocation>
        <location evidence="2">Cell membrane</location>
        <topology evidence="2">Multi-pass membrane protein</topology>
    </subcellularLocation>
</comment>
<comment type="similarity">
    <text evidence="2">Belongs to the BI1 family.</text>
</comment>
<accession>Q03268</accession>
<sequence length="222" mass="24106">MQEQQYQLNSAVAEQREVSGVLRNTYGLLALTLAFSGLVAYVSQQMRLPYPNVFVVLIGFYGLFFLTVKLRNSAWGLVSTFALTGFMGYTLGPILNMYLGLPNGGSVITSAFAMTALVFFGLSAYVLTTRKDMSFLSGFITAGFFVLLGAVLVSLFFQISGLQLAISAGFVLFSSAMILYQTSAIIHGGERNYIMATISLYVSIYNLFISLLQIFGIAGGDD</sequence>
<organism>
    <name type="scientific">Pseudomonas aeruginosa (strain ATCC 15692 / DSM 22644 / CIP 104116 / JCM 14847 / LMG 12228 / 1C / PRS 101 / PAO1)</name>
    <dbReference type="NCBI Taxonomy" id="208964"/>
    <lineage>
        <taxon>Bacteria</taxon>
        <taxon>Pseudomonadati</taxon>
        <taxon>Pseudomonadota</taxon>
        <taxon>Gammaproteobacteria</taxon>
        <taxon>Pseudomonadales</taxon>
        <taxon>Pseudomonadaceae</taxon>
        <taxon>Pseudomonas</taxon>
    </lineage>
</organism>
<gene>
    <name type="ordered locus">PA2604</name>
</gene>
<proteinExistence type="inferred from homology"/>